<reference key="1">
    <citation type="journal article" date="2002" name="J. Bacteriol.">
        <title>Whole-genome comparison of Mycobacterium tuberculosis clinical and laboratory strains.</title>
        <authorList>
            <person name="Fleischmann R.D."/>
            <person name="Alland D."/>
            <person name="Eisen J.A."/>
            <person name="Carpenter L."/>
            <person name="White O."/>
            <person name="Peterson J.D."/>
            <person name="DeBoy R.T."/>
            <person name="Dodson R.J."/>
            <person name="Gwinn M.L."/>
            <person name="Haft D.H."/>
            <person name="Hickey E.K."/>
            <person name="Kolonay J.F."/>
            <person name="Nelson W.C."/>
            <person name="Umayam L.A."/>
            <person name="Ermolaeva M.D."/>
            <person name="Salzberg S.L."/>
            <person name="Delcher A."/>
            <person name="Utterback T.R."/>
            <person name="Weidman J.F."/>
            <person name="Khouri H.M."/>
            <person name="Gill J."/>
            <person name="Mikula A."/>
            <person name="Bishai W."/>
            <person name="Jacobs W.R. Jr."/>
            <person name="Venter J.C."/>
            <person name="Fraser C.M."/>
        </authorList>
    </citation>
    <scope>NUCLEOTIDE SEQUENCE [LARGE SCALE GENOMIC DNA]</scope>
    <source>
        <strain>CDC 1551 / Oshkosh</strain>
    </source>
</reference>
<evidence type="ECO:0000250" key="1">
    <source>
        <dbReference type="UniProtKB" id="P9WMS9"/>
    </source>
</evidence>
<evidence type="ECO:0000255" key="2"/>
<evidence type="ECO:0000305" key="3"/>
<accession>P9WMS8</accession>
<accession>L0TDJ8</accession>
<accession>P64292</accession>
<accession>P72055</accession>
<feature type="chain" id="PRO_0000427249" description="Arabinogalactan biosynthesis recruiting protein MT3897">
    <location>
        <begin position="1"/>
        <end position="121"/>
    </location>
</feature>
<feature type="topological domain" description="Cytoplasmic" evidence="1">
    <location>
        <begin position="1"/>
        <end position="2"/>
    </location>
</feature>
<feature type="transmembrane region" description="Helical" evidence="2">
    <location>
        <begin position="3"/>
        <end position="23"/>
    </location>
</feature>
<feature type="topological domain" description="Periplasmic" evidence="1">
    <location>
        <begin position="24"/>
        <end position="26"/>
    </location>
</feature>
<feature type="transmembrane region" description="Helical" evidence="2">
    <location>
        <begin position="27"/>
        <end position="47"/>
    </location>
</feature>
<feature type="topological domain" description="Cytoplasmic" evidence="1">
    <location>
        <begin position="48"/>
        <end position="61"/>
    </location>
</feature>
<feature type="transmembrane region" description="Helical" evidence="2">
    <location>
        <begin position="62"/>
        <end position="82"/>
    </location>
</feature>
<feature type="topological domain" description="Periplasmic" evidence="1">
    <location>
        <begin position="83"/>
        <end position="91"/>
    </location>
</feature>
<feature type="transmembrane region" description="Helical" evidence="2">
    <location>
        <begin position="92"/>
        <end position="112"/>
    </location>
</feature>
<feature type="topological domain" description="Cytoplasmic" evidence="1">
    <location>
        <begin position="113"/>
        <end position="121"/>
    </location>
</feature>
<dbReference type="EMBL" id="AE000516">
    <property type="protein sequence ID" value="AAK48262.1"/>
    <property type="status" value="ALT_INIT"/>
    <property type="molecule type" value="Genomic_DNA"/>
</dbReference>
<dbReference type="PIR" id="A70697">
    <property type="entry name" value="A70697"/>
</dbReference>
<dbReference type="RefSeq" id="WP_003420627.1">
    <property type="nucleotide sequence ID" value="NZ_KK341227.1"/>
</dbReference>
<dbReference type="KEGG" id="mtc:MT3897"/>
<dbReference type="PATRIC" id="fig|83331.31.peg.4192"/>
<dbReference type="HOGENOM" id="CLU_083873_3_1_11"/>
<dbReference type="UniPathway" id="UPA00963"/>
<dbReference type="Proteomes" id="UP000001020">
    <property type="component" value="Chromosome"/>
</dbReference>
<dbReference type="GO" id="GO:0005886">
    <property type="term" value="C:plasma membrane"/>
    <property type="evidence" value="ECO:0007669"/>
    <property type="project" value="UniProtKB-SubCell"/>
</dbReference>
<dbReference type="GO" id="GO:0045227">
    <property type="term" value="P:capsule polysaccharide biosynthetic process"/>
    <property type="evidence" value="ECO:0007669"/>
    <property type="project" value="UniProtKB-UniPathway"/>
</dbReference>
<dbReference type="GO" id="GO:0071555">
    <property type="term" value="P:cell wall organization"/>
    <property type="evidence" value="ECO:0007669"/>
    <property type="project" value="UniProtKB-KW"/>
</dbReference>
<dbReference type="InterPro" id="IPR051401">
    <property type="entry name" value="GtrA_CellWall_Glycosyl"/>
</dbReference>
<dbReference type="InterPro" id="IPR007267">
    <property type="entry name" value="GtrA_DPMS_TM"/>
</dbReference>
<dbReference type="PANTHER" id="PTHR38459:SF6">
    <property type="entry name" value="ARABINOGALACTAN BIOSYNTHESIS RECRUITING PROTEIN RV3789"/>
    <property type="match status" value="1"/>
</dbReference>
<dbReference type="PANTHER" id="PTHR38459">
    <property type="entry name" value="PROPHAGE BACTOPRENOL-LINKED GLUCOSE TRANSLOCASE HOMOLOG"/>
    <property type="match status" value="1"/>
</dbReference>
<dbReference type="Pfam" id="PF04138">
    <property type="entry name" value="GtrA_DPMS_TM"/>
    <property type="match status" value="1"/>
</dbReference>
<organism>
    <name type="scientific">Mycobacterium tuberculosis (strain CDC 1551 / Oshkosh)</name>
    <dbReference type="NCBI Taxonomy" id="83331"/>
    <lineage>
        <taxon>Bacteria</taxon>
        <taxon>Bacillati</taxon>
        <taxon>Actinomycetota</taxon>
        <taxon>Actinomycetes</taxon>
        <taxon>Mycobacteriales</taxon>
        <taxon>Mycobacteriaceae</taxon>
        <taxon>Mycobacterium</taxon>
        <taxon>Mycobacterium tuberculosis complex</taxon>
    </lineage>
</organism>
<sequence length="121" mass="13377">MRFVVTGGLAGIVDFGLYVVLYKVAGLQVDLSKAISFIVGTITAYLINRRWTFQAEPSTARFVAVMLLYGITFAVQVGLNHLCLALLHYRAWAIPVAFVIAQGTATVINFIVQRAVIFRIR</sequence>
<name>AGBR_MYCTO</name>
<gene>
    <name type="ordered locus">MT3897</name>
</gene>
<comment type="function">
    <text evidence="1">Required for arabinosylation of arabinogalactan (AG), an essential component of the mycobacterial cell wall. Probably acts as an anchor protein recruiting AftA, the first arabinosyl transferase involved in AG biosynthesis.</text>
</comment>
<comment type="pathway">
    <text evidence="1">Cell wall biogenesis; cell wall polysaccharide biosynthesis.</text>
</comment>
<comment type="subunit">
    <text evidence="1">Interacts with the priming arabinosyltransferase AftA.</text>
</comment>
<comment type="subcellular location">
    <subcellularLocation>
        <location evidence="1">Cell inner membrane</location>
        <topology evidence="1 2">Multi-pass membrane protein</topology>
    </subcellularLocation>
</comment>
<comment type="similarity">
    <text evidence="3">Belongs to the GtrA family.</text>
</comment>
<comment type="sequence caution" evidence="3">
    <conflict type="erroneous initiation">
        <sequence resource="EMBL-CDS" id="AAK48262"/>
    </conflict>
</comment>
<keyword id="KW-0997">Cell inner membrane</keyword>
<keyword id="KW-1003">Cell membrane</keyword>
<keyword id="KW-0961">Cell wall biogenesis/degradation</keyword>
<keyword id="KW-0472">Membrane</keyword>
<keyword id="KW-1185">Reference proteome</keyword>
<keyword id="KW-0812">Transmembrane</keyword>
<keyword id="KW-1133">Transmembrane helix</keyword>
<protein>
    <recommendedName>
        <fullName>Arabinogalactan biosynthesis recruiting protein MT3897</fullName>
    </recommendedName>
</protein>
<proteinExistence type="inferred from homology"/>